<comment type="function">
    <text evidence="1">Peptide chain release factor 1 directs the termination of translation in response to the peptide chain termination codons UAG and UAA.</text>
</comment>
<comment type="subcellular location">
    <subcellularLocation>
        <location evidence="1">Cytoplasm</location>
    </subcellularLocation>
</comment>
<comment type="PTM">
    <text evidence="1">Methylated by PrmC. Methylation increases the termination efficiency of RF1.</text>
</comment>
<comment type="similarity">
    <text evidence="1">Belongs to the prokaryotic/mitochondrial release factor family.</text>
</comment>
<proteinExistence type="inferred from homology"/>
<gene>
    <name evidence="1" type="primary">prfA</name>
    <name type="ordered locus">SFV_1225</name>
</gene>
<dbReference type="EMBL" id="CP000266">
    <property type="protein sequence ID" value="ABF03431.1"/>
    <property type="molecule type" value="Genomic_DNA"/>
</dbReference>
<dbReference type="RefSeq" id="WP_000804726.1">
    <property type="nucleotide sequence ID" value="NC_008258.1"/>
</dbReference>
<dbReference type="SMR" id="Q0T5I4"/>
<dbReference type="GeneID" id="93775276"/>
<dbReference type="KEGG" id="sfv:SFV_1225"/>
<dbReference type="HOGENOM" id="CLU_036856_0_1_6"/>
<dbReference type="Proteomes" id="UP000000659">
    <property type="component" value="Chromosome"/>
</dbReference>
<dbReference type="GO" id="GO:0005737">
    <property type="term" value="C:cytoplasm"/>
    <property type="evidence" value="ECO:0007669"/>
    <property type="project" value="UniProtKB-SubCell"/>
</dbReference>
<dbReference type="GO" id="GO:0016149">
    <property type="term" value="F:translation release factor activity, codon specific"/>
    <property type="evidence" value="ECO:0007669"/>
    <property type="project" value="UniProtKB-UniRule"/>
</dbReference>
<dbReference type="FunFam" id="3.30.160.20:FF:000004">
    <property type="entry name" value="Peptide chain release factor 1"/>
    <property type="match status" value="1"/>
</dbReference>
<dbReference type="FunFam" id="3.30.70.1660:FF:000002">
    <property type="entry name" value="Peptide chain release factor 1"/>
    <property type="match status" value="1"/>
</dbReference>
<dbReference type="FunFam" id="3.30.70.1660:FF:000004">
    <property type="entry name" value="Peptide chain release factor 1"/>
    <property type="match status" value="1"/>
</dbReference>
<dbReference type="Gene3D" id="3.30.160.20">
    <property type="match status" value="1"/>
</dbReference>
<dbReference type="Gene3D" id="3.30.70.1660">
    <property type="match status" value="1"/>
</dbReference>
<dbReference type="Gene3D" id="6.10.140.1950">
    <property type="match status" value="1"/>
</dbReference>
<dbReference type="HAMAP" id="MF_00093">
    <property type="entry name" value="Rel_fac_1"/>
    <property type="match status" value="1"/>
</dbReference>
<dbReference type="InterPro" id="IPR005139">
    <property type="entry name" value="PCRF"/>
</dbReference>
<dbReference type="InterPro" id="IPR000352">
    <property type="entry name" value="Pep_chain_release_fac_I"/>
</dbReference>
<dbReference type="InterPro" id="IPR045853">
    <property type="entry name" value="Pep_chain_release_fac_I_sf"/>
</dbReference>
<dbReference type="InterPro" id="IPR050057">
    <property type="entry name" value="Prokaryotic/Mito_RF"/>
</dbReference>
<dbReference type="InterPro" id="IPR004373">
    <property type="entry name" value="RF-1"/>
</dbReference>
<dbReference type="NCBIfam" id="TIGR00019">
    <property type="entry name" value="prfA"/>
    <property type="match status" value="1"/>
</dbReference>
<dbReference type="NCBIfam" id="NF001859">
    <property type="entry name" value="PRK00591.1"/>
    <property type="match status" value="1"/>
</dbReference>
<dbReference type="PANTHER" id="PTHR43804">
    <property type="entry name" value="LD18447P"/>
    <property type="match status" value="1"/>
</dbReference>
<dbReference type="PANTHER" id="PTHR43804:SF7">
    <property type="entry name" value="LD18447P"/>
    <property type="match status" value="1"/>
</dbReference>
<dbReference type="Pfam" id="PF03462">
    <property type="entry name" value="PCRF"/>
    <property type="match status" value="1"/>
</dbReference>
<dbReference type="Pfam" id="PF00472">
    <property type="entry name" value="RF-1"/>
    <property type="match status" value="1"/>
</dbReference>
<dbReference type="SMART" id="SM00937">
    <property type="entry name" value="PCRF"/>
    <property type="match status" value="1"/>
</dbReference>
<dbReference type="SUPFAM" id="SSF75620">
    <property type="entry name" value="Release factor"/>
    <property type="match status" value="1"/>
</dbReference>
<dbReference type="PROSITE" id="PS00745">
    <property type="entry name" value="RF_PROK_I"/>
    <property type="match status" value="1"/>
</dbReference>
<accession>Q0T5I4</accession>
<protein>
    <recommendedName>
        <fullName evidence="1">Peptide chain release factor 1</fullName>
        <shortName evidence="1">RF-1</shortName>
    </recommendedName>
</protein>
<sequence length="360" mass="40517">MKPSIVAKLEALHERHEEVQALLGDAQTIADQERFRALSREYAQLSDVSRCFTDWQQVQEDIETAQMMLDDPEMREMAQDELREAKEKSEQLEQQLQVLLLPKDPDDERNAFLEVRAGTGGDEAALFAGDLFRMYSRYAEARRWRVEIMSASEGEHGGYKEIIAKISGDGVYGRLKFESGGHRVQRVPATESQGRIHTSACTVAVMPELPDAELPDINPADLRIDTFRSSGAGGQHVNTTDSAIRITHLPTGIVVECQDERSQHKNKAKALSVLGARIHAAEMAKRQQAEASTRRNLLGSGDRSDRNRTYNFPQGRVTDHRINLTLYRLDEVMEGKLDMLIEPIIQEHQADQLAALSEQE</sequence>
<feature type="chain" id="PRO_1000004953" description="Peptide chain release factor 1">
    <location>
        <begin position="1"/>
        <end position="360"/>
    </location>
</feature>
<feature type="region of interest" description="Disordered" evidence="2">
    <location>
        <begin position="284"/>
        <end position="313"/>
    </location>
</feature>
<feature type="modified residue" description="N5-methylglutamine" evidence="1">
    <location>
        <position position="235"/>
    </location>
</feature>
<evidence type="ECO:0000255" key="1">
    <source>
        <dbReference type="HAMAP-Rule" id="MF_00093"/>
    </source>
</evidence>
<evidence type="ECO:0000256" key="2">
    <source>
        <dbReference type="SAM" id="MobiDB-lite"/>
    </source>
</evidence>
<name>RF1_SHIF8</name>
<keyword id="KW-0963">Cytoplasm</keyword>
<keyword id="KW-0488">Methylation</keyword>
<keyword id="KW-0648">Protein biosynthesis</keyword>
<reference key="1">
    <citation type="journal article" date="2006" name="BMC Genomics">
        <title>Complete genome sequence of Shigella flexneri 5b and comparison with Shigella flexneri 2a.</title>
        <authorList>
            <person name="Nie H."/>
            <person name="Yang F."/>
            <person name="Zhang X."/>
            <person name="Yang J."/>
            <person name="Chen L."/>
            <person name="Wang J."/>
            <person name="Xiong Z."/>
            <person name="Peng J."/>
            <person name="Sun L."/>
            <person name="Dong J."/>
            <person name="Xue Y."/>
            <person name="Xu X."/>
            <person name="Chen S."/>
            <person name="Yao Z."/>
            <person name="Shen Y."/>
            <person name="Jin Q."/>
        </authorList>
    </citation>
    <scope>NUCLEOTIDE SEQUENCE [LARGE SCALE GENOMIC DNA]</scope>
    <source>
        <strain>8401</strain>
    </source>
</reference>
<organism>
    <name type="scientific">Shigella flexneri serotype 5b (strain 8401)</name>
    <dbReference type="NCBI Taxonomy" id="373384"/>
    <lineage>
        <taxon>Bacteria</taxon>
        <taxon>Pseudomonadati</taxon>
        <taxon>Pseudomonadota</taxon>
        <taxon>Gammaproteobacteria</taxon>
        <taxon>Enterobacterales</taxon>
        <taxon>Enterobacteriaceae</taxon>
        <taxon>Shigella</taxon>
    </lineage>
</organism>